<dbReference type="EMBL" id="CP001099">
    <property type="protein sequence ID" value="ACF12164.1"/>
    <property type="molecule type" value="Genomic_DNA"/>
</dbReference>
<dbReference type="RefSeq" id="WP_012502997.1">
    <property type="nucleotide sequence ID" value="NC_011027.1"/>
</dbReference>
<dbReference type="SMR" id="B3QQG1"/>
<dbReference type="STRING" id="517417.Cpar_1772"/>
<dbReference type="KEGG" id="cpc:Cpar_1772"/>
<dbReference type="eggNOG" id="COG0632">
    <property type="taxonomic scope" value="Bacteria"/>
</dbReference>
<dbReference type="HOGENOM" id="CLU_087936_3_0_10"/>
<dbReference type="OrthoDB" id="5293449at2"/>
<dbReference type="Proteomes" id="UP000008811">
    <property type="component" value="Chromosome"/>
</dbReference>
<dbReference type="GO" id="GO:0005737">
    <property type="term" value="C:cytoplasm"/>
    <property type="evidence" value="ECO:0007669"/>
    <property type="project" value="UniProtKB-SubCell"/>
</dbReference>
<dbReference type="GO" id="GO:0009379">
    <property type="term" value="C:Holliday junction helicase complex"/>
    <property type="evidence" value="ECO:0007669"/>
    <property type="project" value="InterPro"/>
</dbReference>
<dbReference type="GO" id="GO:0048476">
    <property type="term" value="C:Holliday junction resolvase complex"/>
    <property type="evidence" value="ECO:0007669"/>
    <property type="project" value="UniProtKB-UniRule"/>
</dbReference>
<dbReference type="GO" id="GO:0005524">
    <property type="term" value="F:ATP binding"/>
    <property type="evidence" value="ECO:0007669"/>
    <property type="project" value="InterPro"/>
</dbReference>
<dbReference type="GO" id="GO:0000400">
    <property type="term" value="F:four-way junction DNA binding"/>
    <property type="evidence" value="ECO:0007669"/>
    <property type="project" value="UniProtKB-UniRule"/>
</dbReference>
<dbReference type="GO" id="GO:0009378">
    <property type="term" value="F:four-way junction helicase activity"/>
    <property type="evidence" value="ECO:0007669"/>
    <property type="project" value="InterPro"/>
</dbReference>
<dbReference type="GO" id="GO:0006310">
    <property type="term" value="P:DNA recombination"/>
    <property type="evidence" value="ECO:0007669"/>
    <property type="project" value="UniProtKB-UniRule"/>
</dbReference>
<dbReference type="GO" id="GO:0006281">
    <property type="term" value="P:DNA repair"/>
    <property type="evidence" value="ECO:0007669"/>
    <property type="project" value="UniProtKB-UniRule"/>
</dbReference>
<dbReference type="CDD" id="cd14332">
    <property type="entry name" value="UBA_RuvA_C"/>
    <property type="match status" value="1"/>
</dbReference>
<dbReference type="Gene3D" id="1.10.150.20">
    <property type="entry name" value="5' to 3' exonuclease, C-terminal subdomain"/>
    <property type="match status" value="1"/>
</dbReference>
<dbReference type="Gene3D" id="1.10.8.10">
    <property type="entry name" value="DNA helicase RuvA subunit, C-terminal domain"/>
    <property type="match status" value="1"/>
</dbReference>
<dbReference type="Gene3D" id="2.40.50.140">
    <property type="entry name" value="Nucleic acid-binding proteins"/>
    <property type="match status" value="1"/>
</dbReference>
<dbReference type="HAMAP" id="MF_00031">
    <property type="entry name" value="DNA_HJ_migration_RuvA"/>
    <property type="match status" value="1"/>
</dbReference>
<dbReference type="InterPro" id="IPR013849">
    <property type="entry name" value="DNA_helicase_Holl-junc_RuvA_I"/>
</dbReference>
<dbReference type="InterPro" id="IPR003583">
    <property type="entry name" value="Hlx-hairpin-Hlx_DNA-bd_motif"/>
</dbReference>
<dbReference type="InterPro" id="IPR012340">
    <property type="entry name" value="NA-bd_OB-fold"/>
</dbReference>
<dbReference type="InterPro" id="IPR000085">
    <property type="entry name" value="RuvA"/>
</dbReference>
<dbReference type="InterPro" id="IPR010994">
    <property type="entry name" value="RuvA_2-like"/>
</dbReference>
<dbReference type="InterPro" id="IPR011114">
    <property type="entry name" value="RuvA_C"/>
</dbReference>
<dbReference type="InterPro" id="IPR036267">
    <property type="entry name" value="RuvA_C_sf"/>
</dbReference>
<dbReference type="NCBIfam" id="TIGR00084">
    <property type="entry name" value="ruvA"/>
    <property type="match status" value="1"/>
</dbReference>
<dbReference type="Pfam" id="PF14520">
    <property type="entry name" value="HHH_5"/>
    <property type="match status" value="1"/>
</dbReference>
<dbReference type="Pfam" id="PF07499">
    <property type="entry name" value="RuvA_C"/>
    <property type="match status" value="1"/>
</dbReference>
<dbReference type="Pfam" id="PF01330">
    <property type="entry name" value="RuvA_N"/>
    <property type="match status" value="1"/>
</dbReference>
<dbReference type="SMART" id="SM00278">
    <property type="entry name" value="HhH1"/>
    <property type="match status" value="2"/>
</dbReference>
<dbReference type="SUPFAM" id="SSF46929">
    <property type="entry name" value="DNA helicase RuvA subunit, C-terminal domain"/>
    <property type="match status" value="1"/>
</dbReference>
<dbReference type="SUPFAM" id="SSF50249">
    <property type="entry name" value="Nucleic acid-binding proteins"/>
    <property type="match status" value="1"/>
</dbReference>
<dbReference type="SUPFAM" id="SSF47781">
    <property type="entry name" value="RuvA domain 2-like"/>
    <property type="match status" value="1"/>
</dbReference>
<comment type="function">
    <text evidence="1">The RuvA-RuvB-RuvC complex processes Holliday junction (HJ) DNA during genetic recombination and DNA repair, while the RuvA-RuvB complex plays an important role in the rescue of blocked DNA replication forks via replication fork reversal (RFR). RuvA specifically binds to HJ cruciform DNA, conferring on it an open structure. The RuvB hexamer acts as an ATP-dependent pump, pulling dsDNA into and through the RuvAB complex. HJ branch migration allows RuvC to scan DNA until it finds its consensus sequence, where it cleaves and resolves the cruciform DNA.</text>
</comment>
<comment type="subunit">
    <text evidence="1">Homotetramer. Forms an RuvA(8)-RuvB(12)-Holliday junction (HJ) complex. HJ DNA is sandwiched between 2 RuvA tetramers; dsDNA enters through RuvA and exits via RuvB. An RuvB hexamer assembles on each DNA strand where it exits the tetramer. Each RuvB hexamer is contacted by two RuvA subunits (via domain III) on 2 adjacent RuvB subunits; this complex drives branch migration. In the full resolvosome a probable DNA-RuvA(4)-RuvB(12)-RuvC(2) complex forms which resolves the HJ.</text>
</comment>
<comment type="subcellular location">
    <subcellularLocation>
        <location evidence="1">Cytoplasm</location>
    </subcellularLocation>
</comment>
<comment type="domain">
    <text evidence="1">Has three domains with a flexible linker between the domains II and III and assumes an 'L' shape. Domain III is highly mobile and contacts RuvB.</text>
</comment>
<comment type="similarity">
    <text evidence="1">Belongs to the RuvA family.</text>
</comment>
<organism>
    <name type="scientific">Chlorobaculum parvum (strain DSM 263 / NCIMB 8327)</name>
    <name type="common">Chlorobium vibrioforme subsp. thiosulfatophilum</name>
    <dbReference type="NCBI Taxonomy" id="517417"/>
    <lineage>
        <taxon>Bacteria</taxon>
        <taxon>Pseudomonadati</taxon>
        <taxon>Chlorobiota</taxon>
        <taxon>Chlorobiia</taxon>
        <taxon>Chlorobiales</taxon>
        <taxon>Chlorobiaceae</taxon>
        <taxon>Chlorobaculum</taxon>
    </lineage>
</organism>
<feature type="chain" id="PRO_1000090297" description="Holliday junction branch migration complex subunit RuvA">
    <location>
        <begin position="1"/>
        <end position="204"/>
    </location>
</feature>
<feature type="region of interest" description="Domain I" evidence="1">
    <location>
        <begin position="1"/>
        <end position="64"/>
    </location>
</feature>
<feature type="region of interest" description="Domain II" evidence="1">
    <location>
        <begin position="65"/>
        <end position="143"/>
    </location>
</feature>
<feature type="region of interest" description="Flexible linker" evidence="1">
    <location>
        <begin position="144"/>
        <end position="151"/>
    </location>
</feature>
<feature type="region of interest" description="Domain III" evidence="1">
    <location>
        <begin position="151"/>
        <end position="204"/>
    </location>
</feature>
<proteinExistence type="inferred from homology"/>
<reference key="1">
    <citation type="submission" date="2008-06" db="EMBL/GenBank/DDBJ databases">
        <title>Complete sequence of Chlorobaculum parvum NCIB 8327.</title>
        <authorList>
            <consortium name="US DOE Joint Genome Institute"/>
            <person name="Lucas S."/>
            <person name="Copeland A."/>
            <person name="Lapidus A."/>
            <person name="Glavina del Rio T."/>
            <person name="Dalin E."/>
            <person name="Tice H."/>
            <person name="Bruce D."/>
            <person name="Goodwin L."/>
            <person name="Pitluck S."/>
            <person name="Schmutz J."/>
            <person name="Larimer F."/>
            <person name="Land M."/>
            <person name="Hauser L."/>
            <person name="Kyrpides N."/>
            <person name="Mikhailova N."/>
            <person name="Zhao F."/>
            <person name="Li T."/>
            <person name="Liu Z."/>
            <person name="Overmann J."/>
            <person name="Bryant D.A."/>
            <person name="Richardson P."/>
        </authorList>
    </citation>
    <scope>NUCLEOTIDE SEQUENCE [LARGE SCALE GENOMIC DNA]</scope>
    <source>
        <strain>DSM 263 / NCIMB 8327</strain>
    </source>
</reference>
<evidence type="ECO:0000255" key="1">
    <source>
        <dbReference type="HAMAP-Rule" id="MF_00031"/>
    </source>
</evidence>
<keyword id="KW-0963">Cytoplasm</keyword>
<keyword id="KW-0227">DNA damage</keyword>
<keyword id="KW-0233">DNA recombination</keyword>
<keyword id="KW-0234">DNA repair</keyword>
<keyword id="KW-0238">DNA-binding</keyword>
<sequence length="204" mass="21736">MFAFLRGELVTASREEAVVEVSGIGYRLHISSGTSSRLPVPGSPVFLYTHYHVREDLQQLFGFLDEEELQLFRLLLSISGVGPKLAIAVLSGLSVGEIQEAIVSNRPETLFGISGVGRKTAARIILELRDKILKIQPTSSAKAGAPSAVLSATQLIDDAVAALTTLGFPKASAQKAVSKVLETTPGLSVEELVRTSLAAMHNNL</sequence>
<protein>
    <recommendedName>
        <fullName evidence="1">Holliday junction branch migration complex subunit RuvA</fullName>
    </recommendedName>
</protein>
<name>RUVA_CHLP8</name>
<gene>
    <name evidence="1" type="primary">ruvA</name>
    <name type="ordered locus">Cpar_1772</name>
</gene>
<accession>B3QQG1</accession>